<sequence>MPKRTDIQKIMVIGSGPIIIGQAAEFDYAGTQACFSLKEEGYEVVLVNSNPATIMTDKEIADKVYIEPITLEFVTRILRKEGPDALLPTLGGQTGLNMAMELSKNGILDELGVELLGTKLSAIDQAEDRDLFKQLMEELEQPIPESEIVNTVEEAVAFAATIGYPVIVRPAFTLGGTGGGMCANEKELREITENGLKLSPVTQCLIERSIAGFKEIEYEVMRDSADNALVVCNMENFDPVGIHTGDSIVFAPAQTMSDYENQMLRDASLSIIRALKIEGGCNVQLALDPNSFKYYVIEVNPRVSRSSALASKATGYPIAKLAAKIAVGLTLDEVINPVTGSTYAMFEPALDYVVAKIPRFPFDKFEKGERRLGTQMKATGEVMAIGRNIEESLLKACRSLEIGVHHNEIPELAAVSDDALIEKVVKAQDDRLFYVSEAIRRGYTPEEIAELTKIDIFYLDKLLHIFEIEQELGAHPQDLEVLKTAKLNGFSDRKIAELWGTTDDKVRQLRLENKIVPVYKMVDTCAAEFDSETPYFYSTYGWENESIRSDKESVLVLGSGPIRIGQGVEFDYATVHSVKAIQAAGYEAIIMNSNPETVSTDFSVSDKLYFEPLTFEDVMNVIDLEQPKGVIVQFGGQTAINLAEPLAKAGVTILGTQVADLDRAEDRDLFEQALKELDIPQPPGQTATNEEEAALAARKIGFPVLVRPSYVLGGRAMEIVENEEDLRSYMRTAVKASPDHPVLVDSYIVGQECEVDAISDGKNVLIPGIMEHIERAGVHSGDSMAVYPPQTLSQKVQETIADYTKRLAIGLHCLGMMNIQFVIKDEKVYVIEVNPRASRTVPFLSKVTNIPMAQVATKLILGQSLSELGYQNGLYPESTRVHIKAPVFSFTKLAKVDSLLGPEMKSTGEVMGSDATLEKALYKAFEASYLHLPTFGNVVFTIADDAKEEALNLARRFQNIGYGILATEGTAAFFASHGLQAQPVGKIGDDDKDIPSFVRKGRIQAIINTVGTKRTADEDGEQIRRSAIEHGVPLFTALDTANAMLKVLESRSFVTEAI</sequence>
<reference key="1">
    <citation type="journal article" date="2001" name="J. Bacteriol.">
        <title>Genome of the bacterium Streptococcus pneumoniae strain R6.</title>
        <authorList>
            <person name="Hoskins J."/>
            <person name="Alborn W.E. Jr."/>
            <person name="Arnold J."/>
            <person name="Blaszczak L.C."/>
            <person name="Burgett S."/>
            <person name="DeHoff B.S."/>
            <person name="Estrem S.T."/>
            <person name="Fritz L."/>
            <person name="Fu D.-J."/>
            <person name="Fuller W."/>
            <person name="Geringer C."/>
            <person name="Gilmour R."/>
            <person name="Glass J.S."/>
            <person name="Khoja H."/>
            <person name="Kraft A.R."/>
            <person name="Lagace R.E."/>
            <person name="LeBlanc D.J."/>
            <person name="Lee L.N."/>
            <person name="Lefkowitz E.J."/>
            <person name="Lu J."/>
            <person name="Matsushima P."/>
            <person name="McAhren S.M."/>
            <person name="McHenney M."/>
            <person name="McLeaster K."/>
            <person name="Mundy C.W."/>
            <person name="Nicas T.I."/>
            <person name="Norris F.H."/>
            <person name="O'Gara M."/>
            <person name="Peery R.B."/>
            <person name="Robertson G.T."/>
            <person name="Rockey P."/>
            <person name="Sun P.-M."/>
            <person name="Winkler M.E."/>
            <person name="Yang Y."/>
            <person name="Young-Bellido M."/>
            <person name="Zhao G."/>
            <person name="Zook C.A."/>
            <person name="Baltz R.H."/>
            <person name="Jaskunas S.R."/>
            <person name="Rosteck P.R. Jr."/>
            <person name="Skatrud P.L."/>
            <person name="Glass J.I."/>
        </authorList>
    </citation>
    <scope>NUCLEOTIDE SEQUENCE [LARGE SCALE GENOMIC DNA]</scope>
    <source>
        <strain>ATCC BAA-255 / R6</strain>
    </source>
</reference>
<gene>
    <name evidence="1" type="primary">carB</name>
    <name type="ordered locus">spr1153</name>
</gene>
<proteinExistence type="inferred from homology"/>
<dbReference type="EC" id="6.3.4.16" evidence="1"/>
<dbReference type="EC" id="6.3.5.5" evidence="1"/>
<dbReference type="EMBL" id="AE007317">
    <property type="protein sequence ID" value="AAK99956.1"/>
    <property type="molecule type" value="Genomic_DNA"/>
</dbReference>
<dbReference type="PIR" id="H98015">
    <property type="entry name" value="H98015"/>
</dbReference>
<dbReference type="RefSeq" id="NP_358746.1">
    <property type="nucleotide sequence ID" value="NC_003098.1"/>
</dbReference>
<dbReference type="RefSeq" id="WP_001856202.1">
    <property type="nucleotide sequence ID" value="NC_003098.1"/>
</dbReference>
<dbReference type="SMR" id="Q8CWR0"/>
<dbReference type="STRING" id="171101.spr1153"/>
<dbReference type="KEGG" id="spr:spr1153"/>
<dbReference type="PATRIC" id="fig|171101.6.peg.1251"/>
<dbReference type="eggNOG" id="COG0458">
    <property type="taxonomic scope" value="Bacteria"/>
</dbReference>
<dbReference type="HOGENOM" id="CLU_000513_1_2_9"/>
<dbReference type="UniPathway" id="UPA00068">
    <property type="reaction ID" value="UER00171"/>
</dbReference>
<dbReference type="UniPathway" id="UPA00070">
    <property type="reaction ID" value="UER00115"/>
</dbReference>
<dbReference type="Proteomes" id="UP000000586">
    <property type="component" value="Chromosome"/>
</dbReference>
<dbReference type="GO" id="GO:0005737">
    <property type="term" value="C:cytoplasm"/>
    <property type="evidence" value="ECO:0000318"/>
    <property type="project" value="GO_Central"/>
</dbReference>
<dbReference type="GO" id="GO:0005524">
    <property type="term" value="F:ATP binding"/>
    <property type="evidence" value="ECO:0007669"/>
    <property type="project" value="UniProtKB-UniRule"/>
</dbReference>
<dbReference type="GO" id="GO:0004087">
    <property type="term" value="F:carbamoyl-phosphate synthase (ammonia) activity"/>
    <property type="evidence" value="ECO:0007669"/>
    <property type="project" value="RHEA"/>
</dbReference>
<dbReference type="GO" id="GO:0004088">
    <property type="term" value="F:carbamoyl-phosphate synthase (glutamine-hydrolyzing) activity"/>
    <property type="evidence" value="ECO:0007669"/>
    <property type="project" value="UniProtKB-UniRule"/>
</dbReference>
<dbReference type="GO" id="GO:0046872">
    <property type="term" value="F:metal ion binding"/>
    <property type="evidence" value="ECO:0007669"/>
    <property type="project" value="UniProtKB-KW"/>
</dbReference>
<dbReference type="GO" id="GO:0044205">
    <property type="term" value="P:'de novo' UMP biosynthetic process"/>
    <property type="evidence" value="ECO:0007669"/>
    <property type="project" value="UniProtKB-UniRule"/>
</dbReference>
<dbReference type="GO" id="GO:0006541">
    <property type="term" value="P:glutamine metabolic process"/>
    <property type="evidence" value="ECO:0000318"/>
    <property type="project" value="GO_Central"/>
</dbReference>
<dbReference type="GO" id="GO:0006526">
    <property type="term" value="P:L-arginine biosynthetic process"/>
    <property type="evidence" value="ECO:0007669"/>
    <property type="project" value="UniProtKB-UniRule"/>
</dbReference>
<dbReference type="CDD" id="cd01424">
    <property type="entry name" value="MGS_CPS_II"/>
    <property type="match status" value="1"/>
</dbReference>
<dbReference type="FunFam" id="1.10.1030.10:FF:000002">
    <property type="entry name" value="Carbamoyl-phosphate synthase large chain"/>
    <property type="match status" value="1"/>
</dbReference>
<dbReference type="FunFam" id="3.30.1490.20:FF:000001">
    <property type="entry name" value="Carbamoyl-phosphate synthase large chain"/>
    <property type="match status" value="1"/>
</dbReference>
<dbReference type="FunFam" id="3.30.470.20:FF:000001">
    <property type="entry name" value="Carbamoyl-phosphate synthase large chain"/>
    <property type="match status" value="1"/>
</dbReference>
<dbReference type="FunFam" id="3.30.470.20:FF:000026">
    <property type="entry name" value="Carbamoyl-phosphate synthase large chain"/>
    <property type="match status" value="1"/>
</dbReference>
<dbReference type="FunFam" id="3.40.50.1380:FF:000017">
    <property type="entry name" value="Carbamoyl-phosphate synthase large chain"/>
    <property type="match status" value="1"/>
</dbReference>
<dbReference type="FunFam" id="3.40.50.20:FF:000001">
    <property type="entry name" value="Carbamoyl-phosphate synthase large chain"/>
    <property type="match status" value="2"/>
</dbReference>
<dbReference type="Gene3D" id="3.40.50.20">
    <property type="match status" value="2"/>
</dbReference>
<dbReference type="Gene3D" id="3.30.1490.20">
    <property type="entry name" value="ATP-grasp fold, A domain"/>
    <property type="match status" value="1"/>
</dbReference>
<dbReference type="Gene3D" id="3.30.470.20">
    <property type="entry name" value="ATP-grasp fold, B domain"/>
    <property type="match status" value="2"/>
</dbReference>
<dbReference type="Gene3D" id="1.10.1030.10">
    <property type="entry name" value="Carbamoyl-phosphate synthetase, large subunit oligomerisation domain"/>
    <property type="match status" value="1"/>
</dbReference>
<dbReference type="Gene3D" id="3.40.50.1380">
    <property type="entry name" value="Methylglyoxal synthase-like domain"/>
    <property type="match status" value="1"/>
</dbReference>
<dbReference type="HAMAP" id="MF_01210_B">
    <property type="entry name" value="CPSase_L_chain_B"/>
    <property type="match status" value="1"/>
</dbReference>
<dbReference type="InterPro" id="IPR011761">
    <property type="entry name" value="ATP-grasp"/>
</dbReference>
<dbReference type="InterPro" id="IPR013815">
    <property type="entry name" value="ATP_grasp_subdomain_1"/>
</dbReference>
<dbReference type="InterPro" id="IPR006275">
    <property type="entry name" value="CarbamoylP_synth_lsu"/>
</dbReference>
<dbReference type="InterPro" id="IPR005480">
    <property type="entry name" value="CarbamoylP_synth_lsu_oligo"/>
</dbReference>
<dbReference type="InterPro" id="IPR036897">
    <property type="entry name" value="CarbamoylP_synth_lsu_oligo_sf"/>
</dbReference>
<dbReference type="InterPro" id="IPR005479">
    <property type="entry name" value="CbamoylP_synth_lsu-like_ATP-bd"/>
</dbReference>
<dbReference type="InterPro" id="IPR005483">
    <property type="entry name" value="CbamoylP_synth_lsu_CPSase_dom"/>
</dbReference>
<dbReference type="InterPro" id="IPR011607">
    <property type="entry name" value="MGS-like_dom"/>
</dbReference>
<dbReference type="InterPro" id="IPR036914">
    <property type="entry name" value="MGS-like_dom_sf"/>
</dbReference>
<dbReference type="InterPro" id="IPR033937">
    <property type="entry name" value="MGS_CPS_CarB"/>
</dbReference>
<dbReference type="InterPro" id="IPR016185">
    <property type="entry name" value="PreATP-grasp_dom_sf"/>
</dbReference>
<dbReference type="NCBIfam" id="TIGR01369">
    <property type="entry name" value="CPSaseII_lrg"/>
    <property type="match status" value="1"/>
</dbReference>
<dbReference type="NCBIfam" id="NF003671">
    <property type="entry name" value="PRK05294.1"/>
    <property type="match status" value="1"/>
</dbReference>
<dbReference type="NCBIfam" id="NF009455">
    <property type="entry name" value="PRK12815.1"/>
    <property type="match status" value="1"/>
</dbReference>
<dbReference type="PANTHER" id="PTHR11405:SF53">
    <property type="entry name" value="CARBAMOYL-PHOSPHATE SYNTHASE [AMMONIA], MITOCHONDRIAL"/>
    <property type="match status" value="1"/>
</dbReference>
<dbReference type="PANTHER" id="PTHR11405">
    <property type="entry name" value="CARBAMOYLTRANSFERASE FAMILY MEMBER"/>
    <property type="match status" value="1"/>
</dbReference>
<dbReference type="Pfam" id="PF02786">
    <property type="entry name" value="CPSase_L_D2"/>
    <property type="match status" value="2"/>
</dbReference>
<dbReference type="Pfam" id="PF02787">
    <property type="entry name" value="CPSase_L_D3"/>
    <property type="match status" value="1"/>
</dbReference>
<dbReference type="Pfam" id="PF02142">
    <property type="entry name" value="MGS"/>
    <property type="match status" value="1"/>
</dbReference>
<dbReference type="PRINTS" id="PR00098">
    <property type="entry name" value="CPSASE"/>
</dbReference>
<dbReference type="SMART" id="SM01096">
    <property type="entry name" value="CPSase_L_D3"/>
    <property type="match status" value="1"/>
</dbReference>
<dbReference type="SMART" id="SM01209">
    <property type="entry name" value="GARS_A"/>
    <property type="match status" value="1"/>
</dbReference>
<dbReference type="SMART" id="SM00851">
    <property type="entry name" value="MGS"/>
    <property type="match status" value="1"/>
</dbReference>
<dbReference type="SUPFAM" id="SSF48108">
    <property type="entry name" value="Carbamoyl phosphate synthetase, large subunit connection domain"/>
    <property type="match status" value="1"/>
</dbReference>
<dbReference type="SUPFAM" id="SSF56059">
    <property type="entry name" value="Glutathione synthetase ATP-binding domain-like"/>
    <property type="match status" value="2"/>
</dbReference>
<dbReference type="SUPFAM" id="SSF52335">
    <property type="entry name" value="Methylglyoxal synthase-like"/>
    <property type="match status" value="1"/>
</dbReference>
<dbReference type="SUPFAM" id="SSF52440">
    <property type="entry name" value="PreATP-grasp domain"/>
    <property type="match status" value="2"/>
</dbReference>
<dbReference type="PROSITE" id="PS50975">
    <property type="entry name" value="ATP_GRASP"/>
    <property type="match status" value="2"/>
</dbReference>
<dbReference type="PROSITE" id="PS00866">
    <property type="entry name" value="CPSASE_1"/>
    <property type="match status" value="2"/>
</dbReference>
<dbReference type="PROSITE" id="PS00867">
    <property type="entry name" value="CPSASE_2"/>
    <property type="match status" value="2"/>
</dbReference>
<dbReference type="PROSITE" id="PS51855">
    <property type="entry name" value="MGS"/>
    <property type="match status" value="1"/>
</dbReference>
<comment type="function">
    <text evidence="1">Large subunit of the glutamine-dependent carbamoyl phosphate synthetase (CPSase). CPSase catalyzes the formation of carbamoyl phosphate from the ammonia moiety of glutamine, carbonate, and phosphate donated by ATP, constituting the first step of 2 biosynthetic pathways, one leading to arginine and/or urea and the other to pyrimidine nucleotides. The large subunit (synthetase) binds the substrates ammonia (free or transferred from glutamine from the small subunit), hydrogencarbonate and ATP and carries out an ATP-coupled ligase reaction, activating hydrogencarbonate by forming carboxy phosphate which reacts with ammonia to form carbamoyl phosphate.</text>
</comment>
<comment type="catalytic activity">
    <reaction evidence="1">
        <text>hydrogencarbonate + L-glutamine + 2 ATP + H2O = carbamoyl phosphate + L-glutamate + 2 ADP + phosphate + 2 H(+)</text>
        <dbReference type="Rhea" id="RHEA:18633"/>
        <dbReference type="ChEBI" id="CHEBI:15377"/>
        <dbReference type="ChEBI" id="CHEBI:15378"/>
        <dbReference type="ChEBI" id="CHEBI:17544"/>
        <dbReference type="ChEBI" id="CHEBI:29985"/>
        <dbReference type="ChEBI" id="CHEBI:30616"/>
        <dbReference type="ChEBI" id="CHEBI:43474"/>
        <dbReference type="ChEBI" id="CHEBI:58228"/>
        <dbReference type="ChEBI" id="CHEBI:58359"/>
        <dbReference type="ChEBI" id="CHEBI:456216"/>
        <dbReference type="EC" id="6.3.5.5"/>
    </reaction>
</comment>
<comment type="catalytic activity">
    <molecule>Carbamoyl phosphate synthase large chain</molecule>
    <reaction evidence="1">
        <text>hydrogencarbonate + NH4(+) + 2 ATP = carbamoyl phosphate + 2 ADP + phosphate + 2 H(+)</text>
        <dbReference type="Rhea" id="RHEA:18029"/>
        <dbReference type="ChEBI" id="CHEBI:15378"/>
        <dbReference type="ChEBI" id="CHEBI:17544"/>
        <dbReference type="ChEBI" id="CHEBI:28938"/>
        <dbReference type="ChEBI" id="CHEBI:30616"/>
        <dbReference type="ChEBI" id="CHEBI:43474"/>
        <dbReference type="ChEBI" id="CHEBI:58228"/>
        <dbReference type="ChEBI" id="CHEBI:456216"/>
        <dbReference type="EC" id="6.3.4.16"/>
    </reaction>
</comment>
<comment type="cofactor">
    <cofactor evidence="1">
        <name>Mg(2+)</name>
        <dbReference type="ChEBI" id="CHEBI:18420"/>
    </cofactor>
    <cofactor evidence="1">
        <name>Mn(2+)</name>
        <dbReference type="ChEBI" id="CHEBI:29035"/>
    </cofactor>
    <text evidence="1">Binds 4 Mg(2+) or Mn(2+) ions per subunit.</text>
</comment>
<comment type="pathway">
    <text evidence="1">Amino-acid biosynthesis; L-arginine biosynthesis; carbamoyl phosphate from bicarbonate: step 1/1.</text>
</comment>
<comment type="pathway">
    <text evidence="1">Pyrimidine metabolism; UMP biosynthesis via de novo pathway; (S)-dihydroorotate from bicarbonate: step 1/3.</text>
</comment>
<comment type="subunit">
    <text evidence="1">Composed of two chains; the small (or glutamine) chain promotes the hydrolysis of glutamine to ammonia, which is used by the large (or ammonia) chain to synthesize carbamoyl phosphate. Tetramer of heterodimers (alpha,beta)4.</text>
</comment>
<comment type="domain">
    <text evidence="1">The large subunit is composed of 2 ATP-grasp domains that are involved in binding the 2 ATP molecules needed for carbamoyl phosphate synthesis. The N-terminal ATP-grasp domain (referred to as the carboxyphosphate synthetic component) catalyzes the ATP-dependent phosphorylation of hydrogencarbonate to carboxyphosphate and the subsequent nucleophilic attack by ammonia to form a carbamate intermediate. The C-terminal ATP-grasp domain (referred to as the carbamoyl phosphate synthetic component) then catalyzes the phosphorylation of carbamate with the second ATP to form the end product carbamoyl phosphate. The reactive and unstable enzyme intermediates are sequentially channeled from one active site to the next through the interior of the protein over a distance of at least 96 A.</text>
</comment>
<comment type="similarity">
    <text evidence="1">Belongs to the CarB family.</text>
</comment>
<protein>
    <recommendedName>
        <fullName evidence="1">Carbamoyl phosphate synthase large chain</fullName>
        <ecNumber evidence="1">6.3.4.16</ecNumber>
        <ecNumber evidence="1">6.3.5.5</ecNumber>
    </recommendedName>
    <alternativeName>
        <fullName evidence="1">Carbamoyl phosphate synthetase ammonia chain</fullName>
    </alternativeName>
</protein>
<organism>
    <name type="scientific">Streptococcus pneumoniae (strain ATCC BAA-255 / R6)</name>
    <dbReference type="NCBI Taxonomy" id="171101"/>
    <lineage>
        <taxon>Bacteria</taxon>
        <taxon>Bacillati</taxon>
        <taxon>Bacillota</taxon>
        <taxon>Bacilli</taxon>
        <taxon>Lactobacillales</taxon>
        <taxon>Streptococcaceae</taxon>
        <taxon>Streptococcus</taxon>
    </lineage>
</organism>
<name>CARB_STRR6</name>
<keyword id="KW-0028">Amino-acid biosynthesis</keyword>
<keyword id="KW-0055">Arginine biosynthesis</keyword>
<keyword id="KW-0067">ATP-binding</keyword>
<keyword id="KW-0436">Ligase</keyword>
<keyword id="KW-0460">Magnesium</keyword>
<keyword id="KW-0464">Manganese</keyword>
<keyword id="KW-0479">Metal-binding</keyword>
<keyword id="KW-0547">Nucleotide-binding</keyword>
<keyword id="KW-0665">Pyrimidine biosynthesis</keyword>
<keyword id="KW-1185">Reference proteome</keyword>
<keyword id="KW-0677">Repeat</keyword>
<feature type="chain" id="PRO_0000145052" description="Carbamoyl phosphate synthase large chain">
    <location>
        <begin position="1"/>
        <end position="1058"/>
    </location>
</feature>
<feature type="domain" description="ATP-grasp 1" evidence="1">
    <location>
        <begin position="133"/>
        <end position="327"/>
    </location>
</feature>
<feature type="domain" description="ATP-grasp 2" evidence="1">
    <location>
        <begin position="671"/>
        <end position="861"/>
    </location>
</feature>
<feature type="domain" description="MGS-like" evidence="1">
    <location>
        <begin position="930"/>
        <end position="1058"/>
    </location>
</feature>
<feature type="region of interest" description="Carboxyphosphate synthetic domain" evidence="1">
    <location>
        <begin position="1"/>
        <end position="401"/>
    </location>
</feature>
<feature type="region of interest" description="Oligomerization domain" evidence="1">
    <location>
        <begin position="402"/>
        <end position="546"/>
    </location>
</feature>
<feature type="region of interest" description="Carbamoyl phosphate synthetic domain" evidence="1">
    <location>
        <begin position="547"/>
        <end position="929"/>
    </location>
</feature>
<feature type="region of interest" description="Allosteric domain" evidence="1">
    <location>
        <begin position="930"/>
        <end position="1058"/>
    </location>
</feature>
<feature type="binding site" evidence="1">
    <location>
        <position position="129"/>
    </location>
    <ligand>
        <name>ATP</name>
        <dbReference type="ChEBI" id="CHEBI:30616"/>
        <label>1</label>
    </ligand>
</feature>
<feature type="binding site" evidence="1">
    <location>
        <position position="169"/>
    </location>
    <ligand>
        <name>ATP</name>
        <dbReference type="ChEBI" id="CHEBI:30616"/>
        <label>1</label>
    </ligand>
</feature>
<feature type="binding site" evidence="1">
    <location>
        <position position="175"/>
    </location>
    <ligand>
        <name>ATP</name>
        <dbReference type="ChEBI" id="CHEBI:30616"/>
        <label>1</label>
    </ligand>
</feature>
<feature type="binding site" evidence="1">
    <location>
        <position position="176"/>
    </location>
    <ligand>
        <name>ATP</name>
        <dbReference type="ChEBI" id="CHEBI:30616"/>
        <label>1</label>
    </ligand>
</feature>
<feature type="binding site" evidence="1">
    <location>
        <position position="208"/>
    </location>
    <ligand>
        <name>ATP</name>
        <dbReference type="ChEBI" id="CHEBI:30616"/>
        <label>1</label>
    </ligand>
</feature>
<feature type="binding site" evidence="1">
    <location>
        <position position="210"/>
    </location>
    <ligand>
        <name>ATP</name>
        <dbReference type="ChEBI" id="CHEBI:30616"/>
        <label>1</label>
    </ligand>
</feature>
<feature type="binding site" evidence="1">
    <location>
        <position position="215"/>
    </location>
    <ligand>
        <name>ATP</name>
        <dbReference type="ChEBI" id="CHEBI:30616"/>
        <label>1</label>
    </ligand>
</feature>
<feature type="binding site" evidence="1">
    <location>
        <position position="241"/>
    </location>
    <ligand>
        <name>ATP</name>
        <dbReference type="ChEBI" id="CHEBI:30616"/>
        <label>1</label>
    </ligand>
</feature>
<feature type="binding site" evidence="1">
    <location>
        <position position="242"/>
    </location>
    <ligand>
        <name>ATP</name>
        <dbReference type="ChEBI" id="CHEBI:30616"/>
        <label>1</label>
    </ligand>
</feature>
<feature type="binding site" evidence="1">
    <location>
        <position position="243"/>
    </location>
    <ligand>
        <name>ATP</name>
        <dbReference type="ChEBI" id="CHEBI:30616"/>
        <label>1</label>
    </ligand>
</feature>
<feature type="binding site" evidence="1">
    <location>
        <position position="284"/>
    </location>
    <ligand>
        <name>ATP</name>
        <dbReference type="ChEBI" id="CHEBI:30616"/>
        <label>1</label>
    </ligand>
</feature>
<feature type="binding site" evidence="1">
    <location>
        <position position="284"/>
    </location>
    <ligand>
        <name>Mg(2+)</name>
        <dbReference type="ChEBI" id="CHEBI:18420"/>
        <label>1</label>
    </ligand>
</feature>
<feature type="binding site" evidence="1">
    <location>
        <position position="284"/>
    </location>
    <ligand>
        <name>Mn(2+)</name>
        <dbReference type="ChEBI" id="CHEBI:29035"/>
        <label>1</label>
    </ligand>
</feature>
<feature type="binding site" evidence="1">
    <location>
        <position position="298"/>
    </location>
    <ligand>
        <name>ATP</name>
        <dbReference type="ChEBI" id="CHEBI:30616"/>
        <label>1</label>
    </ligand>
</feature>
<feature type="binding site" evidence="1">
    <location>
        <position position="298"/>
    </location>
    <ligand>
        <name>Mg(2+)</name>
        <dbReference type="ChEBI" id="CHEBI:18420"/>
        <label>1</label>
    </ligand>
</feature>
<feature type="binding site" evidence="1">
    <location>
        <position position="298"/>
    </location>
    <ligand>
        <name>Mg(2+)</name>
        <dbReference type="ChEBI" id="CHEBI:18420"/>
        <label>2</label>
    </ligand>
</feature>
<feature type="binding site" evidence="1">
    <location>
        <position position="298"/>
    </location>
    <ligand>
        <name>Mn(2+)</name>
        <dbReference type="ChEBI" id="CHEBI:29035"/>
        <label>1</label>
    </ligand>
</feature>
<feature type="binding site" evidence="1">
    <location>
        <position position="298"/>
    </location>
    <ligand>
        <name>Mn(2+)</name>
        <dbReference type="ChEBI" id="CHEBI:29035"/>
        <label>2</label>
    </ligand>
</feature>
<feature type="binding site" evidence="1">
    <location>
        <position position="300"/>
    </location>
    <ligand>
        <name>Mg(2+)</name>
        <dbReference type="ChEBI" id="CHEBI:18420"/>
        <label>2</label>
    </ligand>
</feature>
<feature type="binding site" evidence="1">
    <location>
        <position position="300"/>
    </location>
    <ligand>
        <name>Mn(2+)</name>
        <dbReference type="ChEBI" id="CHEBI:29035"/>
        <label>2</label>
    </ligand>
</feature>
<feature type="binding site" evidence="1">
    <location>
        <position position="707"/>
    </location>
    <ligand>
        <name>ATP</name>
        <dbReference type="ChEBI" id="CHEBI:30616"/>
        <label>2</label>
    </ligand>
</feature>
<feature type="binding site" evidence="1">
    <location>
        <position position="746"/>
    </location>
    <ligand>
        <name>ATP</name>
        <dbReference type="ChEBI" id="CHEBI:30616"/>
        <label>2</label>
    </ligand>
</feature>
<feature type="binding site" evidence="1">
    <location>
        <position position="748"/>
    </location>
    <ligand>
        <name>ATP</name>
        <dbReference type="ChEBI" id="CHEBI:30616"/>
        <label>2</label>
    </ligand>
</feature>
<feature type="binding site" evidence="1">
    <location>
        <position position="752"/>
    </location>
    <ligand>
        <name>ATP</name>
        <dbReference type="ChEBI" id="CHEBI:30616"/>
        <label>2</label>
    </ligand>
</feature>
<feature type="binding site" evidence="1">
    <location>
        <position position="777"/>
    </location>
    <ligand>
        <name>ATP</name>
        <dbReference type="ChEBI" id="CHEBI:30616"/>
        <label>2</label>
    </ligand>
</feature>
<feature type="binding site" evidence="1">
    <location>
        <position position="778"/>
    </location>
    <ligand>
        <name>ATP</name>
        <dbReference type="ChEBI" id="CHEBI:30616"/>
        <label>2</label>
    </ligand>
</feature>
<feature type="binding site" evidence="1">
    <location>
        <position position="779"/>
    </location>
    <ligand>
        <name>ATP</name>
        <dbReference type="ChEBI" id="CHEBI:30616"/>
        <label>2</label>
    </ligand>
</feature>
<feature type="binding site" evidence="1">
    <location>
        <position position="780"/>
    </location>
    <ligand>
        <name>ATP</name>
        <dbReference type="ChEBI" id="CHEBI:30616"/>
        <label>2</label>
    </ligand>
</feature>
<feature type="binding site" evidence="1">
    <location>
        <position position="820"/>
    </location>
    <ligand>
        <name>ATP</name>
        <dbReference type="ChEBI" id="CHEBI:30616"/>
        <label>2</label>
    </ligand>
</feature>
<feature type="binding site" evidence="1">
    <location>
        <position position="820"/>
    </location>
    <ligand>
        <name>Mg(2+)</name>
        <dbReference type="ChEBI" id="CHEBI:18420"/>
        <label>3</label>
    </ligand>
</feature>
<feature type="binding site" evidence="1">
    <location>
        <position position="820"/>
    </location>
    <ligand>
        <name>Mn(2+)</name>
        <dbReference type="ChEBI" id="CHEBI:29035"/>
        <label>3</label>
    </ligand>
</feature>
<feature type="binding site" evidence="1">
    <location>
        <position position="832"/>
    </location>
    <ligand>
        <name>ATP</name>
        <dbReference type="ChEBI" id="CHEBI:30616"/>
        <label>2</label>
    </ligand>
</feature>
<feature type="binding site" evidence="1">
    <location>
        <position position="832"/>
    </location>
    <ligand>
        <name>Mg(2+)</name>
        <dbReference type="ChEBI" id="CHEBI:18420"/>
        <label>3</label>
    </ligand>
</feature>
<feature type="binding site" evidence="1">
    <location>
        <position position="832"/>
    </location>
    <ligand>
        <name>Mg(2+)</name>
        <dbReference type="ChEBI" id="CHEBI:18420"/>
        <label>4</label>
    </ligand>
</feature>
<feature type="binding site" evidence="1">
    <location>
        <position position="832"/>
    </location>
    <ligand>
        <name>Mn(2+)</name>
        <dbReference type="ChEBI" id="CHEBI:29035"/>
        <label>3</label>
    </ligand>
</feature>
<feature type="binding site" evidence="1">
    <location>
        <position position="832"/>
    </location>
    <ligand>
        <name>Mn(2+)</name>
        <dbReference type="ChEBI" id="CHEBI:29035"/>
        <label>4</label>
    </ligand>
</feature>
<feature type="binding site" evidence="1">
    <location>
        <position position="834"/>
    </location>
    <ligand>
        <name>Mg(2+)</name>
        <dbReference type="ChEBI" id="CHEBI:18420"/>
        <label>4</label>
    </ligand>
</feature>
<feature type="binding site" evidence="1">
    <location>
        <position position="834"/>
    </location>
    <ligand>
        <name>Mn(2+)</name>
        <dbReference type="ChEBI" id="CHEBI:29035"/>
        <label>4</label>
    </ligand>
</feature>
<evidence type="ECO:0000255" key="1">
    <source>
        <dbReference type="HAMAP-Rule" id="MF_01210"/>
    </source>
</evidence>
<accession>Q8CWR0</accession>